<feature type="chain" id="PRO_1000116417" description="SsrA-binding protein">
    <location>
        <begin position="1"/>
        <end position="150"/>
    </location>
</feature>
<sequence length="150" mass="17475">MKVLAQNRRARHDYQILETYEAGIVLSGDEVKSAKEGNVQLRDAFVRVENGEAWLYNMHIAPYEKTGEPFRGDSKRKRKLLLHKREINKILGYLTQKGLTAIPLSMYVNDRGFIKVSIGVAKGKKMVDKRQTIKERDIERELRREGKIRY</sequence>
<protein>
    <recommendedName>
        <fullName evidence="1">SsrA-binding protein</fullName>
    </recommendedName>
    <alternativeName>
        <fullName evidence="1">Small protein B</fullName>
    </alternativeName>
</protein>
<keyword id="KW-0963">Cytoplasm</keyword>
<keyword id="KW-1185">Reference proteome</keyword>
<keyword id="KW-0694">RNA-binding</keyword>
<accession>B5Y7T1</accession>
<name>SSRP_COPPD</name>
<dbReference type="EMBL" id="CP001145">
    <property type="protein sequence ID" value="ACI17321.1"/>
    <property type="molecule type" value="Genomic_DNA"/>
</dbReference>
<dbReference type="RefSeq" id="WP_012543973.1">
    <property type="nucleotide sequence ID" value="NC_011295.1"/>
</dbReference>
<dbReference type="SMR" id="B5Y7T1"/>
<dbReference type="STRING" id="309798.COPRO5265_0467"/>
<dbReference type="KEGG" id="cpo:COPRO5265_0467"/>
<dbReference type="eggNOG" id="COG0691">
    <property type="taxonomic scope" value="Bacteria"/>
</dbReference>
<dbReference type="HOGENOM" id="CLU_108953_0_1_9"/>
<dbReference type="OrthoDB" id="9805462at2"/>
<dbReference type="Proteomes" id="UP000001732">
    <property type="component" value="Chromosome"/>
</dbReference>
<dbReference type="GO" id="GO:0005829">
    <property type="term" value="C:cytosol"/>
    <property type="evidence" value="ECO:0007669"/>
    <property type="project" value="TreeGrafter"/>
</dbReference>
<dbReference type="GO" id="GO:0003723">
    <property type="term" value="F:RNA binding"/>
    <property type="evidence" value="ECO:0007669"/>
    <property type="project" value="UniProtKB-UniRule"/>
</dbReference>
<dbReference type="GO" id="GO:0070929">
    <property type="term" value="P:trans-translation"/>
    <property type="evidence" value="ECO:0007669"/>
    <property type="project" value="UniProtKB-UniRule"/>
</dbReference>
<dbReference type="CDD" id="cd09294">
    <property type="entry name" value="SmpB"/>
    <property type="match status" value="1"/>
</dbReference>
<dbReference type="Gene3D" id="2.40.280.10">
    <property type="match status" value="1"/>
</dbReference>
<dbReference type="HAMAP" id="MF_00023">
    <property type="entry name" value="SmpB"/>
    <property type="match status" value="1"/>
</dbReference>
<dbReference type="InterPro" id="IPR023620">
    <property type="entry name" value="SmpB"/>
</dbReference>
<dbReference type="InterPro" id="IPR000037">
    <property type="entry name" value="SsrA-bd_prot"/>
</dbReference>
<dbReference type="InterPro" id="IPR020081">
    <property type="entry name" value="SsrA-bd_prot_CS"/>
</dbReference>
<dbReference type="NCBIfam" id="NF003843">
    <property type="entry name" value="PRK05422.1"/>
    <property type="match status" value="1"/>
</dbReference>
<dbReference type="NCBIfam" id="TIGR00086">
    <property type="entry name" value="smpB"/>
    <property type="match status" value="1"/>
</dbReference>
<dbReference type="PANTHER" id="PTHR30308:SF2">
    <property type="entry name" value="SSRA-BINDING PROTEIN"/>
    <property type="match status" value="1"/>
</dbReference>
<dbReference type="PANTHER" id="PTHR30308">
    <property type="entry name" value="TMRNA-BINDING COMPONENT OF TRANS-TRANSLATION TAGGING COMPLEX"/>
    <property type="match status" value="1"/>
</dbReference>
<dbReference type="Pfam" id="PF01668">
    <property type="entry name" value="SmpB"/>
    <property type="match status" value="1"/>
</dbReference>
<dbReference type="SUPFAM" id="SSF74982">
    <property type="entry name" value="Small protein B (SmpB)"/>
    <property type="match status" value="1"/>
</dbReference>
<dbReference type="PROSITE" id="PS01317">
    <property type="entry name" value="SSRP"/>
    <property type="match status" value="1"/>
</dbReference>
<reference key="1">
    <citation type="submission" date="2008-08" db="EMBL/GenBank/DDBJ databases">
        <title>The complete genome sequence of Coprothermobacter proteolyticus strain ATCC 5245 / DSM 5265 / BT.</title>
        <authorList>
            <person name="Dodson R.J."/>
            <person name="Durkin A.S."/>
            <person name="Wu M."/>
            <person name="Eisen J."/>
            <person name="Sutton G."/>
        </authorList>
    </citation>
    <scope>NUCLEOTIDE SEQUENCE [LARGE SCALE GENOMIC DNA]</scope>
    <source>
        <strain>ATCC 35245 / DSM 5265 / OCM 4 / BT</strain>
    </source>
</reference>
<proteinExistence type="inferred from homology"/>
<evidence type="ECO:0000255" key="1">
    <source>
        <dbReference type="HAMAP-Rule" id="MF_00023"/>
    </source>
</evidence>
<comment type="function">
    <text evidence="1">Required for rescue of stalled ribosomes mediated by trans-translation. Binds to transfer-messenger RNA (tmRNA), required for stable association of tmRNA with ribosomes. tmRNA and SmpB together mimic tRNA shape, replacing the anticodon stem-loop with SmpB. tmRNA is encoded by the ssrA gene; the 2 termini fold to resemble tRNA(Ala) and it encodes a 'tag peptide', a short internal open reading frame. During trans-translation Ala-aminoacylated tmRNA acts like a tRNA, entering the A-site of stalled ribosomes, displacing the stalled mRNA. The ribosome then switches to translate the ORF on the tmRNA; the nascent peptide is terminated with the 'tag peptide' encoded by the tmRNA and targeted for degradation. The ribosome is freed to recommence translation, which seems to be the essential function of trans-translation.</text>
</comment>
<comment type="subcellular location">
    <subcellularLocation>
        <location evidence="1">Cytoplasm</location>
    </subcellularLocation>
    <text evidence="1">The tmRNA-SmpB complex associates with stalled 70S ribosomes.</text>
</comment>
<comment type="similarity">
    <text evidence="1">Belongs to the SmpB family.</text>
</comment>
<gene>
    <name evidence="1" type="primary">smpB</name>
    <name type="ordered locus">COPRO5265_0467</name>
</gene>
<organism>
    <name type="scientific">Coprothermobacter proteolyticus (strain ATCC 35245 / DSM 5265 / OCM 4 / BT)</name>
    <dbReference type="NCBI Taxonomy" id="309798"/>
    <lineage>
        <taxon>Bacteria</taxon>
        <taxon>Pseudomonadati</taxon>
        <taxon>Coprothermobacterota</taxon>
        <taxon>Coprothermobacteria</taxon>
        <taxon>Coprothermobacterales</taxon>
        <taxon>Coprothermobacteraceae</taxon>
        <taxon>Coprothermobacter</taxon>
    </lineage>
</organism>